<protein>
    <recommendedName>
        <fullName evidence="1">Diaminopimelate epimerase</fullName>
        <shortName evidence="1">DAP epimerase</shortName>
        <ecNumber evidence="1">5.1.1.7</ecNumber>
    </recommendedName>
    <alternativeName>
        <fullName evidence="1">PLP-independent amino acid racemase</fullName>
    </alternativeName>
</protein>
<comment type="function">
    <text evidence="1">Catalyzes the stereoinversion of LL-2,6-diaminopimelate (L,L-DAP) to meso-diaminopimelate (meso-DAP), a precursor of L-lysine and an essential component of the bacterial peptidoglycan.</text>
</comment>
<comment type="catalytic activity">
    <reaction evidence="1">
        <text>(2S,6S)-2,6-diaminopimelate = meso-2,6-diaminopimelate</text>
        <dbReference type="Rhea" id="RHEA:15393"/>
        <dbReference type="ChEBI" id="CHEBI:57609"/>
        <dbReference type="ChEBI" id="CHEBI:57791"/>
        <dbReference type="EC" id="5.1.1.7"/>
    </reaction>
</comment>
<comment type="pathway">
    <text evidence="1">Amino-acid biosynthesis; L-lysine biosynthesis via DAP pathway; DL-2,6-diaminopimelate from LL-2,6-diaminopimelate: step 1/1.</text>
</comment>
<comment type="subunit">
    <text evidence="1">Homodimer.</text>
</comment>
<comment type="subcellular location">
    <subcellularLocation>
        <location evidence="1">Cytoplasm</location>
    </subcellularLocation>
</comment>
<comment type="similarity">
    <text evidence="1">Belongs to the diaminopimelate epimerase family.</text>
</comment>
<gene>
    <name evidence="1" type="primary">dapF</name>
    <name type="ordered locus">Cyan7425_0549</name>
</gene>
<sequence>MSLQFTKYQGLGNDFILIDNRNEATPLLTPEQAVDICDRHFGVGADGVIFLLPATGETDYTMRIFNSDGSEPEMCGNGIRCLARFAADLEGHALTATPRYRIHTLAGTITPQVRSDGQVTVDMGQPRLLAGEIPTTLKPAAEKVIAQPLQVGGRSWSVTCVSMGNPHCITFVENVAAIDLHTLGPQFEHHPAFPQRINTEFIEVIRPDYLKMRVWERGAGMTLACGTGACAALVAAVLNDLSEPRATVELPGGPLEIEWSAPGQAVLMTGPAEQVFQGVL</sequence>
<proteinExistence type="inferred from homology"/>
<name>DAPF_CYAP4</name>
<organism>
    <name type="scientific">Cyanothece sp. (strain PCC 7425 / ATCC 29141)</name>
    <dbReference type="NCBI Taxonomy" id="395961"/>
    <lineage>
        <taxon>Bacteria</taxon>
        <taxon>Bacillati</taxon>
        <taxon>Cyanobacteriota</taxon>
        <taxon>Cyanophyceae</taxon>
        <taxon>Gomontiellales</taxon>
        <taxon>Cyanothecaceae</taxon>
        <taxon>Cyanothece</taxon>
    </lineage>
</organism>
<reference key="1">
    <citation type="journal article" date="2011" name="MBio">
        <title>Novel metabolic attributes of the genus Cyanothece, comprising a group of unicellular nitrogen-fixing Cyanobacteria.</title>
        <authorList>
            <person name="Bandyopadhyay A."/>
            <person name="Elvitigala T."/>
            <person name="Welsh E."/>
            <person name="Stockel J."/>
            <person name="Liberton M."/>
            <person name="Min H."/>
            <person name="Sherman L.A."/>
            <person name="Pakrasi H.B."/>
        </authorList>
    </citation>
    <scope>NUCLEOTIDE SEQUENCE [LARGE SCALE GENOMIC DNA]</scope>
    <source>
        <strain>PCC 7425 / ATCC 29141</strain>
    </source>
</reference>
<accession>B8HU20</accession>
<keyword id="KW-0028">Amino-acid biosynthesis</keyword>
<keyword id="KW-0963">Cytoplasm</keyword>
<keyword id="KW-0413">Isomerase</keyword>
<keyword id="KW-0457">Lysine biosynthesis</keyword>
<feature type="chain" id="PRO_1000124409" description="Diaminopimelate epimerase">
    <location>
        <begin position="1"/>
        <end position="280"/>
    </location>
</feature>
<feature type="active site" description="Proton donor" evidence="1">
    <location>
        <position position="75"/>
    </location>
</feature>
<feature type="active site" description="Proton acceptor" evidence="1">
    <location>
        <position position="225"/>
    </location>
</feature>
<feature type="binding site" evidence="1">
    <location>
        <position position="13"/>
    </location>
    <ligand>
        <name>substrate</name>
    </ligand>
</feature>
<feature type="binding site" evidence="1">
    <location>
        <position position="66"/>
    </location>
    <ligand>
        <name>substrate</name>
    </ligand>
</feature>
<feature type="binding site" evidence="1">
    <location>
        <begin position="76"/>
        <end position="77"/>
    </location>
    <ligand>
        <name>substrate</name>
    </ligand>
</feature>
<feature type="binding site" evidence="1">
    <location>
        <position position="165"/>
    </location>
    <ligand>
        <name>substrate</name>
    </ligand>
</feature>
<feature type="binding site" evidence="1">
    <location>
        <position position="198"/>
    </location>
    <ligand>
        <name>substrate</name>
    </ligand>
</feature>
<feature type="binding site" evidence="1">
    <location>
        <begin position="216"/>
        <end position="217"/>
    </location>
    <ligand>
        <name>substrate</name>
    </ligand>
</feature>
<feature type="binding site" evidence="1">
    <location>
        <begin position="226"/>
        <end position="227"/>
    </location>
    <ligand>
        <name>substrate</name>
    </ligand>
</feature>
<feature type="site" description="Could be important to modulate the pK values of the two catalytic cysteine residues" evidence="1">
    <location>
        <position position="167"/>
    </location>
</feature>
<feature type="site" description="Could be important to modulate the pK values of the two catalytic cysteine residues" evidence="1">
    <location>
        <position position="216"/>
    </location>
</feature>
<dbReference type="EC" id="5.1.1.7" evidence="1"/>
<dbReference type="EMBL" id="CP001344">
    <property type="protein sequence ID" value="ACL42940.1"/>
    <property type="molecule type" value="Genomic_DNA"/>
</dbReference>
<dbReference type="SMR" id="B8HU20"/>
<dbReference type="STRING" id="395961.Cyan7425_0549"/>
<dbReference type="KEGG" id="cyn:Cyan7425_0549"/>
<dbReference type="eggNOG" id="COG0253">
    <property type="taxonomic scope" value="Bacteria"/>
</dbReference>
<dbReference type="HOGENOM" id="CLU_053306_2_1_3"/>
<dbReference type="OrthoDB" id="9805408at2"/>
<dbReference type="UniPathway" id="UPA00034">
    <property type="reaction ID" value="UER00025"/>
</dbReference>
<dbReference type="GO" id="GO:0005829">
    <property type="term" value="C:cytosol"/>
    <property type="evidence" value="ECO:0007669"/>
    <property type="project" value="TreeGrafter"/>
</dbReference>
<dbReference type="GO" id="GO:0008837">
    <property type="term" value="F:diaminopimelate epimerase activity"/>
    <property type="evidence" value="ECO:0007669"/>
    <property type="project" value="UniProtKB-UniRule"/>
</dbReference>
<dbReference type="GO" id="GO:0009089">
    <property type="term" value="P:lysine biosynthetic process via diaminopimelate"/>
    <property type="evidence" value="ECO:0007669"/>
    <property type="project" value="UniProtKB-UniRule"/>
</dbReference>
<dbReference type="FunFam" id="3.10.310.10:FF:000009">
    <property type="entry name" value="Diaminopimelate epimerase chloroplastic"/>
    <property type="match status" value="1"/>
</dbReference>
<dbReference type="FunFam" id="3.10.310.10:FF:000011">
    <property type="entry name" value="Diaminopimelate epimerase, chloroplastic"/>
    <property type="match status" value="1"/>
</dbReference>
<dbReference type="Gene3D" id="3.10.310.10">
    <property type="entry name" value="Diaminopimelate Epimerase, Chain A, domain 1"/>
    <property type="match status" value="2"/>
</dbReference>
<dbReference type="HAMAP" id="MF_00197">
    <property type="entry name" value="DAP_epimerase"/>
    <property type="match status" value="1"/>
</dbReference>
<dbReference type="InterPro" id="IPR018510">
    <property type="entry name" value="DAP_epimerase_AS"/>
</dbReference>
<dbReference type="InterPro" id="IPR001653">
    <property type="entry name" value="DAP_epimerase_DapF"/>
</dbReference>
<dbReference type="NCBIfam" id="TIGR00652">
    <property type="entry name" value="DapF"/>
    <property type="match status" value="1"/>
</dbReference>
<dbReference type="PANTHER" id="PTHR31689:SF0">
    <property type="entry name" value="DIAMINOPIMELATE EPIMERASE"/>
    <property type="match status" value="1"/>
</dbReference>
<dbReference type="PANTHER" id="PTHR31689">
    <property type="entry name" value="DIAMINOPIMELATE EPIMERASE, CHLOROPLASTIC"/>
    <property type="match status" value="1"/>
</dbReference>
<dbReference type="Pfam" id="PF01678">
    <property type="entry name" value="DAP_epimerase"/>
    <property type="match status" value="2"/>
</dbReference>
<dbReference type="SUPFAM" id="SSF54506">
    <property type="entry name" value="Diaminopimelate epimerase-like"/>
    <property type="match status" value="2"/>
</dbReference>
<dbReference type="PROSITE" id="PS01326">
    <property type="entry name" value="DAP_EPIMERASE"/>
    <property type="match status" value="1"/>
</dbReference>
<evidence type="ECO:0000255" key="1">
    <source>
        <dbReference type="HAMAP-Rule" id="MF_00197"/>
    </source>
</evidence>